<gene>
    <name evidence="1" type="primary">nuoA</name>
    <name type="ordered locus">Rpal_4743</name>
</gene>
<proteinExistence type="inferred from homology"/>
<organism>
    <name type="scientific">Rhodopseudomonas palustris (strain TIE-1)</name>
    <dbReference type="NCBI Taxonomy" id="395960"/>
    <lineage>
        <taxon>Bacteria</taxon>
        <taxon>Pseudomonadati</taxon>
        <taxon>Pseudomonadota</taxon>
        <taxon>Alphaproteobacteria</taxon>
        <taxon>Hyphomicrobiales</taxon>
        <taxon>Nitrobacteraceae</taxon>
        <taxon>Rhodopseudomonas</taxon>
    </lineage>
</organism>
<keyword id="KW-0997">Cell inner membrane</keyword>
<keyword id="KW-1003">Cell membrane</keyword>
<keyword id="KW-0472">Membrane</keyword>
<keyword id="KW-0520">NAD</keyword>
<keyword id="KW-0874">Quinone</keyword>
<keyword id="KW-1278">Translocase</keyword>
<keyword id="KW-0812">Transmembrane</keyword>
<keyword id="KW-1133">Transmembrane helix</keyword>
<keyword id="KW-0813">Transport</keyword>
<keyword id="KW-0830">Ubiquinone</keyword>
<name>NUOA_RHOPT</name>
<evidence type="ECO:0000255" key="1">
    <source>
        <dbReference type="HAMAP-Rule" id="MF_01394"/>
    </source>
</evidence>
<protein>
    <recommendedName>
        <fullName evidence="1">NADH-quinone oxidoreductase subunit A</fullName>
        <ecNumber evidence="1">7.1.1.-</ecNumber>
    </recommendedName>
    <alternativeName>
        <fullName evidence="1">NADH dehydrogenase I subunit A</fullName>
    </alternativeName>
    <alternativeName>
        <fullName evidence="1">NDH-1 subunit A</fullName>
    </alternativeName>
    <alternativeName>
        <fullName evidence="1">NUO1</fullName>
    </alternativeName>
</protein>
<dbReference type="EC" id="7.1.1.-" evidence="1"/>
<dbReference type="EMBL" id="CP001096">
    <property type="protein sequence ID" value="ACF03234.1"/>
    <property type="molecule type" value="Genomic_DNA"/>
</dbReference>
<dbReference type="RefSeq" id="WP_011159799.1">
    <property type="nucleotide sequence ID" value="NC_011004.1"/>
</dbReference>
<dbReference type="SMR" id="B3Q6T5"/>
<dbReference type="KEGG" id="rpt:Rpal_4743"/>
<dbReference type="HOGENOM" id="CLU_119549_2_1_5"/>
<dbReference type="OrthoDB" id="9791970at2"/>
<dbReference type="Proteomes" id="UP000001725">
    <property type="component" value="Chromosome"/>
</dbReference>
<dbReference type="GO" id="GO:0030964">
    <property type="term" value="C:NADH dehydrogenase complex"/>
    <property type="evidence" value="ECO:0007669"/>
    <property type="project" value="TreeGrafter"/>
</dbReference>
<dbReference type="GO" id="GO:0005886">
    <property type="term" value="C:plasma membrane"/>
    <property type="evidence" value="ECO:0007669"/>
    <property type="project" value="UniProtKB-SubCell"/>
</dbReference>
<dbReference type="GO" id="GO:0008137">
    <property type="term" value="F:NADH dehydrogenase (ubiquinone) activity"/>
    <property type="evidence" value="ECO:0007669"/>
    <property type="project" value="InterPro"/>
</dbReference>
<dbReference type="GO" id="GO:0050136">
    <property type="term" value="F:NADH:ubiquinone reductase (non-electrogenic) activity"/>
    <property type="evidence" value="ECO:0007669"/>
    <property type="project" value="UniProtKB-UniRule"/>
</dbReference>
<dbReference type="GO" id="GO:0048038">
    <property type="term" value="F:quinone binding"/>
    <property type="evidence" value="ECO:0007669"/>
    <property type="project" value="UniProtKB-KW"/>
</dbReference>
<dbReference type="Gene3D" id="1.20.58.1610">
    <property type="entry name" value="NADH:ubiquinone/plastoquinone oxidoreductase, chain 3"/>
    <property type="match status" value="1"/>
</dbReference>
<dbReference type="HAMAP" id="MF_01394">
    <property type="entry name" value="NDH1_NuoA"/>
    <property type="match status" value="1"/>
</dbReference>
<dbReference type="InterPro" id="IPR023043">
    <property type="entry name" value="NAD(P)H_OxRDtase_bac/plastid"/>
</dbReference>
<dbReference type="InterPro" id="IPR000440">
    <property type="entry name" value="NADH_UbQ/plastoQ_OxRdtase_su3"/>
</dbReference>
<dbReference type="InterPro" id="IPR038430">
    <property type="entry name" value="NDAH_ubi_oxred_su3_sf"/>
</dbReference>
<dbReference type="PANTHER" id="PTHR11058:SF21">
    <property type="entry name" value="NADH-QUINONE OXIDOREDUCTASE SUBUNIT A"/>
    <property type="match status" value="1"/>
</dbReference>
<dbReference type="PANTHER" id="PTHR11058">
    <property type="entry name" value="NADH-UBIQUINONE OXIDOREDUCTASE CHAIN 3"/>
    <property type="match status" value="1"/>
</dbReference>
<dbReference type="Pfam" id="PF00507">
    <property type="entry name" value="Oxidored_q4"/>
    <property type="match status" value="1"/>
</dbReference>
<comment type="function">
    <text evidence="1">NDH-1 shuttles electrons from NADH, via FMN and iron-sulfur (Fe-S) centers, to quinones in the respiratory chain. The immediate electron acceptor for the enzyme in this species is believed to be ubiquinone. Couples the redox reaction to proton translocation (for every two electrons transferred, four hydrogen ions are translocated across the cytoplasmic membrane), and thus conserves the redox energy in a proton gradient.</text>
</comment>
<comment type="catalytic activity">
    <reaction evidence="1">
        <text>a quinone + NADH + 5 H(+)(in) = a quinol + NAD(+) + 4 H(+)(out)</text>
        <dbReference type="Rhea" id="RHEA:57888"/>
        <dbReference type="ChEBI" id="CHEBI:15378"/>
        <dbReference type="ChEBI" id="CHEBI:24646"/>
        <dbReference type="ChEBI" id="CHEBI:57540"/>
        <dbReference type="ChEBI" id="CHEBI:57945"/>
        <dbReference type="ChEBI" id="CHEBI:132124"/>
    </reaction>
</comment>
<comment type="subunit">
    <text evidence="1">NDH-1 is composed of 14 different subunits. Subunits NuoA, H, J, K, L, M, N constitute the membrane sector of the complex.</text>
</comment>
<comment type="subcellular location">
    <subcellularLocation>
        <location evidence="1">Cell inner membrane</location>
        <topology evidence="1">Multi-pass membrane protein</topology>
    </subcellularLocation>
</comment>
<comment type="similarity">
    <text evidence="1">Belongs to the complex I subunit 3 family.</text>
</comment>
<sequence>MGDLTLPINSGAALAIHVALSAGIVAAIIVVAAWLREKRSGARPDVPYEGGVLPAQPQQGPLNAPYFLIAALFVIFDMEAAILFAWAVAARDAGWLGLIEAAVFIGVLLLALVYLWLDGALDWVKGKRR</sequence>
<accession>B3Q6T5</accession>
<reference key="1">
    <citation type="submission" date="2008-05" db="EMBL/GenBank/DDBJ databases">
        <title>Complete sequence of Rhodopseudomonas palustris TIE-1.</title>
        <authorList>
            <consortium name="US DOE Joint Genome Institute"/>
            <person name="Lucas S."/>
            <person name="Copeland A."/>
            <person name="Lapidus A."/>
            <person name="Glavina del Rio T."/>
            <person name="Dalin E."/>
            <person name="Tice H."/>
            <person name="Pitluck S."/>
            <person name="Chain P."/>
            <person name="Malfatti S."/>
            <person name="Shin M."/>
            <person name="Vergez L."/>
            <person name="Lang D."/>
            <person name="Schmutz J."/>
            <person name="Larimer F."/>
            <person name="Land M."/>
            <person name="Hauser L."/>
            <person name="Kyrpides N."/>
            <person name="Mikhailova N."/>
            <person name="Emerson D."/>
            <person name="Newman D.K."/>
            <person name="Roden E."/>
            <person name="Richardson P."/>
        </authorList>
    </citation>
    <scope>NUCLEOTIDE SEQUENCE [LARGE SCALE GENOMIC DNA]</scope>
    <source>
        <strain>TIE-1</strain>
    </source>
</reference>
<feature type="chain" id="PRO_0000362760" description="NADH-quinone oxidoreductase subunit A">
    <location>
        <begin position="1"/>
        <end position="129"/>
    </location>
</feature>
<feature type="transmembrane region" description="Helical" evidence="1">
    <location>
        <begin position="14"/>
        <end position="34"/>
    </location>
</feature>
<feature type="transmembrane region" description="Helical" evidence="1">
    <location>
        <begin position="67"/>
        <end position="87"/>
    </location>
</feature>
<feature type="transmembrane region" description="Helical" evidence="1">
    <location>
        <begin position="95"/>
        <end position="115"/>
    </location>
</feature>